<name>PHOSP_NDVB1</name>
<organismHost>
    <name type="scientific">Gallus gallus</name>
    <name type="common">Chicken</name>
    <dbReference type="NCBI Taxonomy" id="9031"/>
</organismHost>
<proteinExistence type="inferred from homology"/>
<protein>
    <recommendedName>
        <fullName>Phosphoprotein</fullName>
        <shortName>Protein P</shortName>
    </recommendedName>
</protein>
<gene>
    <name type="primary">P</name>
</gene>
<feature type="chain" id="PRO_0000390626" description="Phosphoprotein">
    <location>
        <begin position="1"/>
        <end position="395"/>
    </location>
</feature>
<feature type="region of interest" description="Disordered" evidence="5">
    <location>
        <begin position="46"/>
        <end position="105"/>
    </location>
</feature>
<feature type="region of interest" description="Disordered" evidence="5">
    <location>
        <begin position="127"/>
        <end position="181"/>
    </location>
</feature>
<feature type="region of interest" description="Disordered" evidence="5">
    <location>
        <begin position="193"/>
        <end position="217"/>
    </location>
</feature>
<feature type="region of interest" description="Multimerization" evidence="4">
    <location>
        <begin position="222"/>
        <end position="285"/>
    </location>
</feature>
<feature type="compositionally biased region" description="Basic and acidic residues" evidence="5">
    <location>
        <begin position="65"/>
        <end position="74"/>
    </location>
</feature>
<feature type="compositionally biased region" description="Polar residues" evidence="5">
    <location>
        <begin position="75"/>
        <end position="101"/>
    </location>
</feature>
<feature type="compositionally biased region" description="Polar residues" evidence="5">
    <location>
        <begin position="127"/>
        <end position="180"/>
    </location>
</feature>
<feature type="compositionally biased region" description="Polar residues" evidence="5">
    <location>
        <begin position="203"/>
        <end position="212"/>
    </location>
</feature>
<comment type="function">
    <text evidence="3 4">Essential cofactor of the RNA polymerase L that plays a central role in the transcription and replication by forming the polymerase complex with RNA polymerase L and recruiting L to the genomic N-RNA template for RNA synthesis (By similarity). Also plays a central role in the encapsidation of nascent RNA chains by forming the encapsidation complex with the nucleocapsid protein N (N-P complex). Acts as a chaperone for newly synthesized free N protein, so-called N0, allowing encapsidation of nascent RNA chains during replication (By similarity). The nucleoprotein protein N prevents excessive phosphorylation of P, which leads to down-regulation of viral transcription/ replication. Participates, together with N, in the formation of viral factories (viroplasms), which are large inclusions in the host cytoplasm where replication takes place (By similarity).</text>
</comment>
<comment type="subunit">
    <text evidence="3 4">Homotetramer. Interacts (via multimerization domain) with polymerase L; this interaction forms the polymerase L-P complex (By similarity). Interacts (via N-terminus) with N0 (via Ncore); this interaction allows P to chaperon N0 to avoid N polymerization before encapsidation. Interacts (via C-terminus) with N-RNA template; this interaction positions the polymerase on the template for both transcription and replication (By similarity).</text>
</comment>
<comment type="subcellular location">
    <subcellularLocation>
        <location>Host cytoplasm</location>
    </subcellularLocation>
</comment>
<comment type="domain">
    <text evidence="2 3 4">The N-terminus consists of a long intrinsically disordered tail. The central part contains the coiled-coil multimerization domain (PMD) (By similarity). Forms a four-stranded coiled coil structure (By similarity). The C-terminus constitutes the alpha-helical domain that binds to the nucleocapsid (N-RNA complex) (By similarity).</text>
</comment>
<comment type="RNA editing">
    <location>
        <position position="136" evidence="1"/>
    </location>
    <text evidence="1">Partially edited. RNA editing at this position consists of an insertion of one or two guanine nucleotides. The sequence displayed here is the P protein, derived from the unedited RNA. The edited RNA gives rise to the V protein (+1G) (AC P0C765), and the W protein (+2G) (AC P0C766) (By similarity).</text>
</comment>
<comment type="similarity">
    <text evidence="6">Belongs to the rubulavirus/avulavirus P protein family.</text>
</comment>
<keyword id="KW-1035">Host cytoplasm</keyword>
<keyword id="KW-0597">Phosphoprotein</keyword>
<keyword id="KW-1185">Reference proteome</keyword>
<keyword id="KW-0691">RNA editing</keyword>
<keyword id="KW-0693">Viral RNA replication</keyword>
<accession>Q9DLD6</accession>
<dbReference type="EMBL" id="AF309418">
    <property type="protein sequence ID" value="AAG36983.1"/>
    <property type="molecule type" value="Genomic_RNA"/>
</dbReference>
<dbReference type="RefSeq" id="NP_071467.1">
    <property type="nucleotide sequence ID" value="NC_002617.1"/>
</dbReference>
<dbReference type="SMR" id="Q9DLD6"/>
<dbReference type="Proteomes" id="UP000002328">
    <property type="component" value="Segment"/>
</dbReference>
<dbReference type="GO" id="GO:0030430">
    <property type="term" value="C:host cell cytoplasm"/>
    <property type="evidence" value="ECO:0007669"/>
    <property type="project" value="UniProtKB-SubCell"/>
</dbReference>
<dbReference type="CDD" id="cd21031">
    <property type="entry name" value="MEV_P-protein-C_like"/>
    <property type="match status" value="1"/>
</dbReference>
<dbReference type="Gene3D" id="1.20.5.300">
    <property type="match status" value="1"/>
</dbReference>
<dbReference type="InterPro" id="IPR004897">
    <property type="entry name" value="P/V_Pprotein_paramyxoviral"/>
</dbReference>
<dbReference type="InterPro" id="IPR025909">
    <property type="entry name" value="Soyouz_module"/>
</dbReference>
<dbReference type="Pfam" id="PF03210">
    <property type="entry name" value="Paramyx_P_V_C"/>
    <property type="match status" value="1"/>
</dbReference>
<dbReference type="Pfam" id="PF14313">
    <property type="entry name" value="Soyouz_module"/>
    <property type="match status" value="1"/>
</dbReference>
<evidence type="ECO:0000250" key="1"/>
<evidence type="ECO:0000250" key="2">
    <source>
        <dbReference type="UniProtKB" id="P04859"/>
    </source>
</evidence>
<evidence type="ECO:0000250" key="3">
    <source>
        <dbReference type="UniProtKB" id="P06162"/>
    </source>
</evidence>
<evidence type="ECO:0000250" key="4">
    <source>
        <dbReference type="UniProtKB" id="Q77M42"/>
    </source>
</evidence>
<evidence type="ECO:0000256" key="5">
    <source>
        <dbReference type="SAM" id="MobiDB-lite"/>
    </source>
</evidence>
<evidence type="ECO:0000305" key="6"/>
<organism>
    <name type="scientific">Newcastle disease virus (strain Chicken/United States/B1/48)</name>
    <name type="common">NDV</name>
    <dbReference type="NCBI Taxonomy" id="652953"/>
    <lineage>
        <taxon>Viruses</taxon>
        <taxon>Riboviria</taxon>
        <taxon>Orthornavirae</taxon>
        <taxon>Negarnaviricota</taxon>
        <taxon>Haploviricotina</taxon>
        <taxon>Monjiviricetes</taxon>
        <taxon>Mononegavirales</taxon>
        <taxon>Paramyxoviridae</taxon>
        <taxon>Avulavirinae</taxon>
        <taxon>Orthoavulavirus</taxon>
        <taxon>Orthoavulavirus javaense</taxon>
        <taxon>Avian paramyxovirus 1</taxon>
    </lineage>
</organism>
<reference key="1">
    <citation type="submission" date="2000-09" db="EMBL/GenBank/DDBJ databases">
        <title>Complete sequence for the B1 strain of Newcastle disease virus.</title>
        <authorList>
            <person name="Sellers H.S."/>
            <person name="Seal B.S."/>
        </authorList>
    </citation>
    <scope>NUCLEOTIDE SEQUENCE [GENOMIC RNA]</scope>
</reference>
<sequence length="395" mass="42292">MATFTDAEIDELFETSGTVIDNIITAQGKPAETVGRSAIPQGKTKVLSAAWEKHGSIQPPASQDNPDRQDRSDKQPSTPEQTTPHDSPPATSADQPPTQATDEAVDTQLRTGASNSLLLMLDKLSNKSSNAKKGPWSSPQEGNHQRPTQQQGSQPSRGNSQERPQNQVKAAPGNQGTDVNTAYHGQWEESQLSAGATPHGLRSKQSQNNTPVSADHFHPPVDFVQAMMSIMEGISQRVSKVAYQVDLVFKQTSSIPMMGSEIQQLKTFVAVMEANLGMMKILDPGCANISSLSDLRAVARSHPVLVSGPGDPSPYVIQGGEMALNKLSQPVPHPSELIKPATACGPDIGVERDTVRALIMSRPMHPSSSAKLLSKLDAAGSIEEIRKIKRLALNG</sequence>